<keyword id="KW-0963">Cytoplasm</keyword>
<keyword id="KW-0238">DNA-binding</keyword>
<keyword id="KW-1185">Reference proteome</keyword>
<organism>
    <name type="scientific">Nitratiruptor sp. (strain SB155-2)</name>
    <dbReference type="NCBI Taxonomy" id="387092"/>
    <lineage>
        <taxon>Bacteria</taxon>
        <taxon>Pseudomonadati</taxon>
        <taxon>Campylobacterota</taxon>
        <taxon>Epsilonproteobacteria</taxon>
        <taxon>Nautiliales</taxon>
        <taxon>Nitratiruptoraceae</taxon>
        <taxon>Nitratiruptor</taxon>
    </lineage>
</organism>
<name>Y256_NITSB</name>
<feature type="chain" id="PRO_1000003786" description="Nucleoid-associated protein NIS_0256">
    <location>
        <begin position="1"/>
        <end position="103"/>
    </location>
</feature>
<sequence>MFDKMNLGDLGKVFEEIQERAKKLQEEQESKSFIAKSGGGLIKVTANGKGEIIDIEIDDSLLEDKDSLQILLISAINDVLKMVEEDKQRSALSMMTPDIFGQK</sequence>
<accession>A6Q1L1</accession>
<gene>
    <name type="ordered locus">NIS_0256</name>
</gene>
<proteinExistence type="inferred from homology"/>
<protein>
    <recommendedName>
        <fullName evidence="1">Nucleoid-associated protein NIS_0256</fullName>
    </recommendedName>
</protein>
<comment type="function">
    <text evidence="1">Binds to DNA and alters its conformation. May be involved in regulation of gene expression, nucleoid organization and DNA protection.</text>
</comment>
<comment type="subunit">
    <text evidence="1">Homodimer.</text>
</comment>
<comment type="subcellular location">
    <subcellularLocation>
        <location evidence="1">Cytoplasm</location>
        <location evidence="1">Nucleoid</location>
    </subcellularLocation>
</comment>
<comment type="similarity">
    <text evidence="1">Belongs to the YbaB/EbfC family.</text>
</comment>
<dbReference type="EMBL" id="AP009178">
    <property type="protein sequence ID" value="BAF69370.1"/>
    <property type="molecule type" value="Genomic_DNA"/>
</dbReference>
<dbReference type="RefSeq" id="WP_012081633.1">
    <property type="nucleotide sequence ID" value="NC_009662.1"/>
</dbReference>
<dbReference type="SMR" id="A6Q1L1"/>
<dbReference type="FunCoup" id="A6Q1L1">
    <property type="interactions" value="345"/>
</dbReference>
<dbReference type="STRING" id="387092.NIS_0256"/>
<dbReference type="KEGG" id="nis:NIS_0256"/>
<dbReference type="eggNOG" id="COG0718">
    <property type="taxonomic scope" value="Bacteria"/>
</dbReference>
<dbReference type="HOGENOM" id="CLU_140930_2_1_7"/>
<dbReference type="InParanoid" id="A6Q1L1"/>
<dbReference type="OrthoDB" id="5343857at2"/>
<dbReference type="Proteomes" id="UP000001118">
    <property type="component" value="Chromosome"/>
</dbReference>
<dbReference type="GO" id="GO:0043590">
    <property type="term" value="C:bacterial nucleoid"/>
    <property type="evidence" value="ECO:0007669"/>
    <property type="project" value="UniProtKB-UniRule"/>
</dbReference>
<dbReference type="GO" id="GO:0005829">
    <property type="term" value="C:cytosol"/>
    <property type="evidence" value="ECO:0007669"/>
    <property type="project" value="TreeGrafter"/>
</dbReference>
<dbReference type="GO" id="GO:0003677">
    <property type="term" value="F:DNA binding"/>
    <property type="evidence" value="ECO:0007669"/>
    <property type="project" value="UniProtKB-UniRule"/>
</dbReference>
<dbReference type="Gene3D" id="3.30.1310.10">
    <property type="entry name" value="Nucleoid-associated protein YbaB-like domain"/>
    <property type="match status" value="1"/>
</dbReference>
<dbReference type="HAMAP" id="MF_00274">
    <property type="entry name" value="DNA_YbaB_EbfC"/>
    <property type="match status" value="1"/>
</dbReference>
<dbReference type="InterPro" id="IPR036894">
    <property type="entry name" value="YbaB-like_sf"/>
</dbReference>
<dbReference type="InterPro" id="IPR004401">
    <property type="entry name" value="YbaB/EbfC"/>
</dbReference>
<dbReference type="NCBIfam" id="TIGR00103">
    <property type="entry name" value="DNA_YbaB_EbfC"/>
    <property type="match status" value="1"/>
</dbReference>
<dbReference type="PANTHER" id="PTHR33449">
    <property type="entry name" value="NUCLEOID-ASSOCIATED PROTEIN YBAB"/>
    <property type="match status" value="1"/>
</dbReference>
<dbReference type="PANTHER" id="PTHR33449:SF1">
    <property type="entry name" value="NUCLEOID-ASSOCIATED PROTEIN YBAB"/>
    <property type="match status" value="1"/>
</dbReference>
<dbReference type="Pfam" id="PF02575">
    <property type="entry name" value="YbaB_DNA_bd"/>
    <property type="match status" value="1"/>
</dbReference>
<dbReference type="PIRSF" id="PIRSF004555">
    <property type="entry name" value="UCP004555"/>
    <property type="match status" value="1"/>
</dbReference>
<dbReference type="SUPFAM" id="SSF82607">
    <property type="entry name" value="YbaB-like"/>
    <property type="match status" value="1"/>
</dbReference>
<reference key="1">
    <citation type="journal article" date="2007" name="Proc. Natl. Acad. Sci. U.S.A.">
        <title>Deep-sea vent epsilon-proteobacterial genomes provide insights into emergence of pathogens.</title>
        <authorList>
            <person name="Nakagawa S."/>
            <person name="Takaki Y."/>
            <person name="Shimamura S."/>
            <person name="Reysenbach A.-L."/>
            <person name="Takai K."/>
            <person name="Horikoshi K."/>
        </authorList>
    </citation>
    <scope>NUCLEOTIDE SEQUENCE [LARGE SCALE GENOMIC DNA]</scope>
    <source>
        <strain>SB155-2</strain>
    </source>
</reference>
<evidence type="ECO:0000255" key="1">
    <source>
        <dbReference type="HAMAP-Rule" id="MF_00274"/>
    </source>
</evidence>